<accession>B6TCE8</accession>
<organism>
    <name type="scientific">Zea mays</name>
    <name type="common">Maize</name>
    <dbReference type="NCBI Taxonomy" id="4577"/>
    <lineage>
        <taxon>Eukaryota</taxon>
        <taxon>Viridiplantae</taxon>
        <taxon>Streptophyta</taxon>
        <taxon>Embryophyta</taxon>
        <taxon>Tracheophyta</taxon>
        <taxon>Spermatophyta</taxon>
        <taxon>Magnoliopsida</taxon>
        <taxon>Liliopsida</taxon>
        <taxon>Poales</taxon>
        <taxon>Poaceae</taxon>
        <taxon>PACMAD clade</taxon>
        <taxon>Panicoideae</taxon>
        <taxon>Andropogonodae</taxon>
        <taxon>Andropogoneae</taxon>
        <taxon>Tripsacinae</taxon>
        <taxon>Zea</taxon>
    </lineage>
</organism>
<name>NNJA8_MAIZE</name>
<reference key="1">
    <citation type="journal article" date="2009" name="Plant Mol. Biol.">
        <title>Insights into corn genes derived from large-scale cDNA sequencing.</title>
        <authorList>
            <person name="Alexandrov N.N."/>
            <person name="Brover V.V."/>
            <person name="Freidin S."/>
            <person name="Troukhan M.E."/>
            <person name="Tatarinova T.V."/>
            <person name="Zhang H."/>
            <person name="Swaller T.J."/>
            <person name="Lu Y.-P."/>
            <person name="Bouck J."/>
            <person name="Flavell R.B."/>
            <person name="Feldmann K.A."/>
        </authorList>
    </citation>
    <scope>NUCLEOTIDE SEQUENCE [LARGE SCALE MRNA]</scope>
</reference>
<dbReference type="EMBL" id="EU962663">
    <property type="protein sequence ID" value="ACG34781.1"/>
    <property type="molecule type" value="mRNA"/>
</dbReference>
<dbReference type="RefSeq" id="NP_001143733.1">
    <property type="nucleotide sequence ID" value="NM_001150261.1"/>
</dbReference>
<dbReference type="FunCoup" id="B6TCE8">
    <property type="interactions" value="3178"/>
</dbReference>
<dbReference type="STRING" id="4577.B6TCE8"/>
<dbReference type="GeneID" id="100276485"/>
<dbReference type="KEGG" id="zma:100276485"/>
<dbReference type="InParanoid" id="B6TCE8"/>
<dbReference type="OrthoDB" id="1936656at2759"/>
<dbReference type="Proteomes" id="UP000007305">
    <property type="component" value="Unplaced"/>
</dbReference>
<dbReference type="ExpressionAtlas" id="B6TCE8">
    <property type="expression patterns" value="baseline and differential"/>
</dbReference>
<dbReference type="GO" id="GO:0005634">
    <property type="term" value="C:nucleus"/>
    <property type="evidence" value="ECO:0000318"/>
    <property type="project" value="GO_Central"/>
</dbReference>
<dbReference type="GO" id="GO:0009867">
    <property type="term" value="P:jasmonic acid mediated signaling pathway"/>
    <property type="evidence" value="ECO:0000318"/>
    <property type="project" value="GO_Central"/>
</dbReference>
<dbReference type="GO" id="GO:0045892">
    <property type="term" value="P:negative regulation of DNA-templated transcription"/>
    <property type="evidence" value="ECO:0000318"/>
    <property type="project" value="GO_Central"/>
</dbReference>
<dbReference type="InterPro" id="IPR031307">
    <property type="entry name" value="Ninja_fam"/>
</dbReference>
<dbReference type="InterPro" id="IPR012463">
    <property type="entry name" value="Ninja_motif"/>
</dbReference>
<dbReference type="InterPro" id="IPR032308">
    <property type="entry name" value="TDBD"/>
</dbReference>
<dbReference type="PANTHER" id="PTHR31413">
    <property type="entry name" value="AFP HOMOLOG 2"/>
    <property type="match status" value="1"/>
</dbReference>
<dbReference type="PANTHER" id="PTHR31413:SF12">
    <property type="entry name" value="AFP HOMOLOG 2"/>
    <property type="match status" value="1"/>
</dbReference>
<dbReference type="Pfam" id="PF07897">
    <property type="entry name" value="EAR"/>
    <property type="match status" value="1"/>
</dbReference>
<dbReference type="Pfam" id="PF16135">
    <property type="entry name" value="TDBD"/>
    <property type="match status" value="1"/>
</dbReference>
<comment type="subcellular location">
    <subcellularLocation>
        <location evidence="1">Nucleus</location>
    </subcellularLocation>
</comment>
<comment type="similarity">
    <text evidence="3">Belongs to the Ninja family.</text>
</comment>
<proteinExistence type="evidence at transcript level"/>
<keyword id="KW-0539">Nucleus</keyword>
<keyword id="KW-1185">Reference proteome</keyword>
<protein>
    <recommendedName>
        <fullName>Ninja-family protein 8</fullName>
    </recommendedName>
</protein>
<sequence length="478" mass="49600">MDDDNGLELSLGLSLGGSSGKAKARDAPLEPKAEPQVEESSSKGGLQTPDAPSGKFYQKSADNHEQNSKQRHSPVAPQFGNFWGQPGNSSGPVVDGSVEPVSHQPQLSSYQDGRMPINSGNNSEEQKPVSGNHKLPSEEMNFQKKHQTASDQPDAFSKSSDGGAKNAPISISTDDGSTGENEDVAESEAEGSNSWLVAQREDSAKGSVVNKGSDRKRSADAAADGFKGKRQPSFSGSESSSGKLTPGNLISMQASNVVALPYQVPGQVSGPPVLTNAPNFHPVCTVQLRPPTNGGLAVQTMGSASQVAFGYPAVQLPTLETGSSWAFGAPPQALSSFTAKDKADQTGTKQVDDGKKPQEAGASSSAHAEDEKKADRGLSLMGSAIRPGIAPNVKFGGSGSYPDLPWVSTIGAGPNGRTISGVTYKFGRNEVKIVCACHGTHMSPEEFMRHASADAPAQDNSATLPAFPAGNQATSAEN</sequence>
<feature type="chain" id="PRO_0000369626" description="Ninja-family protein 8">
    <location>
        <begin position="1"/>
        <end position="478"/>
    </location>
</feature>
<feature type="region of interest" description="Disordered" evidence="2">
    <location>
        <begin position="1"/>
        <end position="247"/>
    </location>
</feature>
<feature type="region of interest" description="Disordered" evidence="2">
    <location>
        <begin position="337"/>
        <end position="374"/>
    </location>
</feature>
<feature type="region of interest" description="Disordered" evidence="2">
    <location>
        <begin position="454"/>
        <end position="478"/>
    </location>
</feature>
<feature type="compositionally biased region" description="Basic and acidic residues" evidence="2">
    <location>
        <begin position="23"/>
        <end position="35"/>
    </location>
</feature>
<feature type="compositionally biased region" description="Polar residues" evidence="2">
    <location>
        <begin position="169"/>
        <end position="179"/>
    </location>
</feature>
<feature type="compositionally biased region" description="Acidic residues" evidence="2">
    <location>
        <begin position="180"/>
        <end position="189"/>
    </location>
</feature>
<feature type="compositionally biased region" description="Low complexity" evidence="2">
    <location>
        <begin position="233"/>
        <end position="242"/>
    </location>
</feature>
<feature type="compositionally biased region" description="Basic and acidic residues" evidence="2">
    <location>
        <begin position="339"/>
        <end position="358"/>
    </location>
</feature>
<evidence type="ECO:0000250" key="1"/>
<evidence type="ECO:0000256" key="2">
    <source>
        <dbReference type="SAM" id="MobiDB-lite"/>
    </source>
</evidence>
<evidence type="ECO:0000305" key="3"/>